<gene>
    <name evidence="18" type="primary">Slc7a2</name>
    <name type="synonym">Atrc2</name>
    <name type="synonym">Tea</name>
</gene>
<comment type="function">
    <text evidence="4 6 7 8">Functions as a permease involved in the transport of the cationic amino acids (L-arginine, L-lysine, L-ornithine and L-homoarginine); the affinity for its substrates differs between isoforms created by alternative splicing (PubMed:8195186, PubMed:8385111, PubMed:9174363). May play a role in classical or alternative activation of macrophages via its role in arginine transport (PubMed:16670299).</text>
</comment>
<comment type="function">
    <molecule>Isoform 1</molecule>
    <text evidence="6 8">Functions as a low-affinity, high capacity permease involved in the transport of the cationic amino acids (L-arginine, L-lysine, L-ornithine and L-homoarginine).</text>
</comment>
<comment type="function">
    <molecule>Isoform 2</molecule>
    <text evidence="6 8">Functions as a permease that mediates the transport of the cationic amino acids (L-arginine, L-lysine, L-ornithine and L-homoarginine). Shows a much higher affinity for L-arginine than isoform 1.</text>
</comment>
<comment type="catalytic activity">
    <molecule>Isoform 1</molecule>
    <reaction evidence="6 7 8">
        <text>L-arginine(in) = L-arginine(out)</text>
        <dbReference type="Rhea" id="RHEA:32143"/>
        <dbReference type="ChEBI" id="CHEBI:32682"/>
    </reaction>
</comment>
<comment type="catalytic activity">
    <molecule>Isoform 2</molecule>
    <reaction evidence="6 8">
        <text>L-arginine(in) = L-arginine(out)</text>
        <dbReference type="Rhea" id="RHEA:32143"/>
        <dbReference type="ChEBI" id="CHEBI:32682"/>
    </reaction>
</comment>
<comment type="catalytic activity">
    <reaction evidence="17">
        <text>L-lysine(in) = L-lysine(out)</text>
        <dbReference type="Rhea" id="RHEA:70935"/>
        <dbReference type="ChEBI" id="CHEBI:32551"/>
    </reaction>
</comment>
<comment type="catalytic activity">
    <reaction evidence="17">
        <text>L-ornithine(in) = L-ornithine(out)</text>
        <dbReference type="Rhea" id="RHEA:71199"/>
        <dbReference type="ChEBI" id="CHEBI:46911"/>
    </reaction>
</comment>
<comment type="catalytic activity">
    <reaction evidence="1">
        <text>L-homoarginine(in) = L-homoarginine(out)</text>
        <dbReference type="Rhea" id="RHEA:71203"/>
        <dbReference type="ChEBI" id="CHEBI:143006"/>
    </reaction>
</comment>
<comment type="biophysicochemical properties">
    <molecule>Isoform 1</molecule>
    <kinetics>
        <KM evidence="8">2.1 mM for L-arginine</KM>
        <KM evidence="6">2.7 mM for L-arginine</KM>
        <text evidence="7">KM is between 2.15 and 5.2 mM for L-arginine.</text>
    </kinetics>
</comment>
<comment type="biophysicochemical properties">
    <molecule>Isoform 2</molecule>
    <kinetics>
        <KM evidence="8">0.25 mM for L-arginine</KM>
        <KM evidence="6">0.038 mM for L-arginine</KM>
    </kinetics>
</comment>
<comment type="subcellular location">
    <subcellularLocation>
        <location evidence="6 7">Cell membrane</location>
        <topology evidence="6 7">Multi-pass membrane protein</topology>
    </subcellularLocation>
</comment>
<comment type="alternative products">
    <event type="alternative splicing"/>
    <isoform>
        <id>P18581-1</id>
        <name>1</name>
        <name>Alpha</name>
        <name evidence="15">CAT-2A</name>
        <sequence type="displayed"/>
    </isoform>
    <isoform>
        <id>P18581-2</id>
        <name>2</name>
        <name>Beta</name>
        <name evidence="15">CAT-2B</name>
        <sequence type="described" ref="VSP_000025"/>
    </isoform>
</comment>
<comment type="tissue specificity">
    <text evidence="3 7">Detected in liver (at protein level) (PubMed:8385111). Highest expression in liver and T-cells. Also expressed in brain and lung.</text>
</comment>
<comment type="induction">
    <text evidence="4">By macrophage activation.</text>
</comment>
<comment type="PTM">
    <text evidence="7">N-glycosylated.</text>
</comment>
<comment type="disruption phenotype">
    <text evidence="5">Intracellular polyamine levels are reduced in hepatocytes. Infection of knockout mice with parasite P.berghei (ANKA strain) sporozoites results in a reduction in the parasite load in the liver compared to wild type mice.</text>
</comment>
<comment type="miscellaneous">
    <molecule>Isoform 2</molecule>
    <text evidence="6">Affinity of isoform 2 for arginine uptake is 70-fold higher than for isoform 1.</text>
</comment>
<comment type="similarity">
    <text evidence="16">Belongs to the amino acid-polyamine-organocation (APC) superfamily. Cationic amino acid transporter (CAT) (TC 2.A.3.3) family.</text>
</comment>
<feature type="chain" id="PRO_0000054265" description="Cationic amino acid transporter 2">
    <location>
        <begin position="1"/>
        <end position="657"/>
    </location>
</feature>
<feature type="topological domain" description="Cytoplasmic" evidence="2">
    <location>
        <begin position="1"/>
        <end position="37"/>
    </location>
</feature>
<feature type="transmembrane region" description="Helical" evidence="2">
    <location>
        <begin position="38"/>
        <end position="59"/>
    </location>
</feature>
<feature type="topological domain" description="Extracellular" evidence="2">
    <location>
        <begin position="60"/>
        <end position="63"/>
    </location>
</feature>
<feature type="transmembrane region" description="Helical" evidence="2">
    <location>
        <begin position="64"/>
        <end position="84"/>
    </location>
</feature>
<feature type="topological domain" description="Cytoplasmic" evidence="2">
    <location>
        <begin position="85"/>
        <end position="104"/>
    </location>
</feature>
<feature type="transmembrane region" description="Helical" evidence="2">
    <location>
        <begin position="105"/>
        <end position="125"/>
    </location>
</feature>
<feature type="topological domain" description="Extracellular" evidence="2">
    <location>
        <begin position="126"/>
        <end position="163"/>
    </location>
</feature>
<feature type="transmembrane region" description="Helical" evidence="2">
    <location>
        <begin position="164"/>
        <end position="184"/>
    </location>
</feature>
<feature type="topological domain" description="Cytoplasmic" evidence="2">
    <location>
        <begin position="185"/>
        <end position="192"/>
    </location>
</feature>
<feature type="transmembrane region" description="Helical" evidence="2">
    <location>
        <begin position="193"/>
        <end position="213"/>
    </location>
</feature>
<feature type="topological domain" description="Extracellular" evidence="2">
    <location>
        <begin position="214"/>
        <end position="248"/>
    </location>
</feature>
<feature type="transmembrane region" description="Helical" evidence="2">
    <location>
        <begin position="249"/>
        <end position="269"/>
    </location>
</feature>
<feature type="topological domain" description="Cytoplasmic" evidence="2">
    <location>
        <begin position="270"/>
        <end position="289"/>
    </location>
</feature>
<feature type="transmembrane region" description="Helical" evidence="2">
    <location>
        <begin position="290"/>
        <end position="309"/>
    </location>
</feature>
<feature type="topological domain" description="Extracellular" evidence="2">
    <location>
        <begin position="310"/>
        <end position="339"/>
    </location>
</feature>
<feature type="transmembrane region" description="Helical" evidence="2">
    <location>
        <begin position="340"/>
        <end position="360"/>
    </location>
</feature>
<feature type="topological domain" description="Cytoplasmic" evidence="2">
    <location>
        <begin position="361"/>
        <end position="385"/>
    </location>
</feature>
<feature type="transmembrane region" description="Helical" evidence="2">
    <location>
        <begin position="386"/>
        <end position="406"/>
    </location>
</feature>
<feature type="topological domain" description="Extracellular" evidence="2">
    <location>
        <begin position="407"/>
        <end position="409"/>
    </location>
</feature>
<feature type="transmembrane region" description="Helical" evidence="2">
    <location>
        <begin position="410"/>
        <end position="430"/>
    </location>
</feature>
<feature type="topological domain" description="Cytoplasmic" evidence="2">
    <location>
        <begin position="431"/>
        <end position="489"/>
    </location>
</feature>
<feature type="transmembrane region" description="Helical" evidence="2">
    <location>
        <begin position="490"/>
        <end position="510"/>
    </location>
</feature>
<feature type="topological domain" description="Extracellular" evidence="2">
    <location>
        <begin position="511"/>
        <end position="523"/>
    </location>
</feature>
<feature type="transmembrane region" description="Helical" evidence="2">
    <location>
        <begin position="524"/>
        <end position="548"/>
    </location>
</feature>
<feature type="topological domain" description="Cytoplasmic" evidence="2">
    <location>
        <begin position="549"/>
        <end position="556"/>
    </location>
</feature>
<feature type="transmembrane region" description="Helical" evidence="2">
    <location>
        <begin position="557"/>
        <end position="577"/>
    </location>
</feature>
<feature type="topological domain" description="Extracellular" evidence="2">
    <location>
        <begin position="578"/>
        <end position="581"/>
    </location>
</feature>
<feature type="transmembrane region" description="Helical" evidence="2">
    <location>
        <begin position="582"/>
        <end position="602"/>
    </location>
</feature>
<feature type="topological domain" description="Cytoplasmic" evidence="2">
    <location>
        <begin position="603"/>
        <end position="657"/>
    </location>
</feature>
<feature type="modified residue" description="Phosphoserine" evidence="1">
    <location>
        <position position="24"/>
    </location>
</feature>
<feature type="modified residue" description="Phosphoserine" evidence="1">
    <location>
        <position position="463"/>
    </location>
</feature>
<feature type="modified residue" description="Phosphoserine" evidence="19 20">
    <location>
        <position position="645"/>
    </location>
</feature>
<feature type="glycosylation site" description="N-linked (GlcNAc...) asparagine" evidence="2">
    <location>
        <position position="157"/>
    </location>
</feature>
<feature type="glycosylation site" description="N-linked (GlcNAc...) asparagine" evidence="2">
    <location>
        <position position="227"/>
    </location>
</feature>
<feature type="glycosylation site" description="N-linked (GlcNAc...) asparagine" evidence="2">
    <location>
        <position position="239"/>
    </location>
</feature>
<feature type="splice variant" id="VSP_000025" description="In isoform 2." evidence="9 10 11 12">
    <original>MFPLPRILFAMARDGLLFRFLARVSKRQSPVAATMTAGVIS</original>
    <variation>IFPMPRVIYAMAEDGLLFKCLAQINSKTKTPVIATLSSGAVA</variation>
    <location>
        <begin position="357"/>
        <end position="397"/>
    </location>
</feature>
<feature type="sequence conflict" description="In Ref. 5; BAE32720." evidence="16" ref="5">
    <original>L</original>
    <variation>P</variation>
    <location>
        <position position="142"/>
    </location>
</feature>
<feature type="sequence conflict" description="In Ref. 5; BAE32720." evidence="16" ref="5">
    <original>S</original>
    <variation>R</variation>
    <location>
        <position position="242"/>
    </location>
</feature>
<feature type="sequence conflict" description="In Ref. 5; BAE42415." evidence="16" ref="5">
    <original>E</original>
    <variation>K</variation>
    <location>
        <position position="280"/>
    </location>
</feature>
<feature type="sequence conflict" description="In Ref. 1; AAA75250, 2; AAA37372/AAA37350, 3; AAA20397, 4; AAY87029, 5; BAE42415 and 7; AAI27083." evidence="16" ref="1 2 3 4 5 7">
    <original>S</original>
    <variation>G</variation>
    <location>
        <position position="335"/>
    </location>
</feature>
<feature type="sequence conflict" description="In Ref. 1; AAA75250, 2; AAA37372/AAA37350, 3; AAA20397, 4; AAY87029, 5; BAE42415 and 7; AAI27083." evidence="16" ref="1 2 3 4 5 7">
    <original>S</original>
    <variation>A</variation>
    <location>
        <position position="342"/>
    </location>
</feature>
<feature type="sequence conflict" description="In Ref. 1; AAA75250 and 5; BAE32720/BAE42415." evidence="16" ref="1 5">
    <original>M</original>
    <variation>I</variation>
    <location>
        <position position="357"/>
    </location>
</feature>
<feature type="sequence conflict" description="In Ref. 1; AAA75250 and 5; BAE32720/BAE42415." evidence="16" ref="1 5">
    <original>R</original>
    <variation>E</variation>
    <location>
        <position position="369"/>
    </location>
</feature>
<feature type="sequence conflict" description="In Ref. 2; AAA37372." evidence="16" ref="2">
    <original>I</original>
    <variation>M</variation>
    <location>
        <position position="430"/>
    </location>
</feature>
<feature type="sequence conflict" description="In Ref. 1; AAA75250, 2; AAA37372/AAA37350, 3; AAA20397, 4; AAY87029, 5; BAE42415 and 7; AAI27083." evidence="16" ref="1 2 3 4 5 7">
    <original>D</original>
    <variation>E</variation>
    <location>
        <position position="440"/>
    </location>
</feature>
<feature type="sequence conflict" description="In Ref. 1; AAA75250, 2; AAA37372/AAA37350, 3; AAA20397, 4; AAY87029, 5; BAE42415 and 7; AAI27083." evidence="16" ref="1 2 3 4 5 7">
    <original>V</original>
    <variation>A</variation>
    <location>
        <position position="537"/>
    </location>
</feature>
<feature type="sequence conflict" description="In Ref. 1; AAA75250, 2; AAA37372/AAA37350, 3; AAA20397, 4; AAY87029, 5; BAE42415 and 7; AAI27083." evidence="16" ref="1 2 3 4 5 7">
    <original>D</original>
    <variation>E</variation>
    <location>
        <position position="622"/>
    </location>
</feature>
<feature type="sequence conflict" description="In Ref. 1; AAA75250, 2; AAA37372/AAA37350, 3; AAA20397, 4; AAY87029, 5; BAE42415 and 7; AAI27083." evidence="16" ref="1 2 3 4 5 7">
    <original>A</original>
    <variation>V</variation>
    <location>
        <position position="626"/>
    </location>
</feature>
<feature type="sequence conflict" description="In Ref. 1; AAA75250, 2; AAA37372/AAA37350, 3; AAA20397, 4; AAY87029, 5; BAE42415 and 7; AAI27083." evidence="16" ref="1 2 3 4 5 7">
    <original>A</original>
    <variation>V</variation>
    <location>
        <position position="633"/>
    </location>
</feature>
<name>CTR2_MOUSE</name>
<keyword id="KW-0025">Alternative splicing</keyword>
<keyword id="KW-0029">Amino-acid transport</keyword>
<keyword id="KW-1003">Cell membrane</keyword>
<keyword id="KW-0325">Glycoprotein</keyword>
<keyword id="KW-0472">Membrane</keyword>
<keyword id="KW-0597">Phosphoprotein</keyword>
<keyword id="KW-1185">Reference proteome</keyword>
<keyword id="KW-0812">Transmembrane</keyword>
<keyword id="KW-1133">Transmembrane helix</keyword>
<keyword id="KW-0813">Transport</keyword>
<proteinExistence type="evidence at protein level"/>
<organism>
    <name type="scientific">Mus musculus</name>
    <name type="common">Mouse</name>
    <dbReference type="NCBI Taxonomy" id="10090"/>
    <lineage>
        <taxon>Eukaryota</taxon>
        <taxon>Metazoa</taxon>
        <taxon>Chordata</taxon>
        <taxon>Craniata</taxon>
        <taxon>Vertebrata</taxon>
        <taxon>Euteleostomi</taxon>
        <taxon>Mammalia</taxon>
        <taxon>Eutheria</taxon>
        <taxon>Euarchontoglires</taxon>
        <taxon>Glires</taxon>
        <taxon>Rodentia</taxon>
        <taxon>Myomorpha</taxon>
        <taxon>Muroidea</taxon>
        <taxon>Muridae</taxon>
        <taxon>Murinae</taxon>
        <taxon>Mus</taxon>
        <taxon>Mus</taxon>
    </lineage>
</organism>
<accession>P18581</accession>
<accession>E9QPL9</accession>
<accession>Q38RA6</accession>
<accession>Q3TB99</accession>
<accession>Q3U3R5</accession>
<dbReference type="EMBL" id="M62838">
    <property type="protein sequence ID" value="AAA75250.1"/>
    <property type="molecule type" value="mRNA"/>
</dbReference>
<dbReference type="EMBL" id="L03290">
    <property type="protein sequence ID" value="AAA37372.1"/>
    <property type="molecule type" value="mRNA"/>
</dbReference>
<dbReference type="EMBL" id="L11600">
    <property type="protein sequence ID" value="AAA37350.1"/>
    <property type="molecule type" value="mRNA"/>
</dbReference>
<dbReference type="EMBL" id="L29006">
    <property type="protein sequence ID" value="AAA20397.1"/>
    <property type="molecule type" value="mRNA"/>
</dbReference>
<dbReference type="EMBL" id="DQ086834">
    <property type="protein sequence ID" value="AAY87029.1"/>
    <property type="molecule type" value="mRNA"/>
</dbReference>
<dbReference type="EMBL" id="AK154621">
    <property type="protein sequence ID" value="BAE32720.1"/>
    <property type="molecule type" value="mRNA"/>
</dbReference>
<dbReference type="EMBL" id="AK171369">
    <property type="protein sequence ID" value="BAE42415.1"/>
    <property type="molecule type" value="mRNA"/>
</dbReference>
<dbReference type="EMBL" id="AC116511">
    <property type="status" value="NOT_ANNOTATED_CDS"/>
    <property type="molecule type" value="Genomic_DNA"/>
</dbReference>
<dbReference type="EMBL" id="BC127082">
    <property type="protein sequence ID" value="AAI27083.1"/>
    <property type="molecule type" value="mRNA"/>
</dbReference>
<dbReference type="CCDS" id="CCDS22258.1">
    <molecule id="P18581-1"/>
</dbReference>
<dbReference type="CCDS" id="CCDS40327.1">
    <molecule id="P18581-2"/>
</dbReference>
<dbReference type="PIR" id="A54011">
    <property type="entry name" value="A54011"/>
</dbReference>
<dbReference type="RefSeq" id="NP_001038205.1">
    <molecule id="P18581-2"/>
    <property type="nucleotide sequence ID" value="NM_001044740.2"/>
</dbReference>
<dbReference type="RefSeq" id="NP_031540.2">
    <molecule id="P18581-1"/>
    <property type="nucleotide sequence ID" value="NM_007514.3"/>
</dbReference>
<dbReference type="RefSeq" id="XP_006509314.2">
    <molecule id="P18581-1"/>
    <property type="nucleotide sequence ID" value="XM_006509251.5"/>
</dbReference>
<dbReference type="RefSeq" id="XP_006509316.1">
    <molecule id="P18581-2"/>
    <property type="nucleotide sequence ID" value="XM_006509253.5"/>
</dbReference>
<dbReference type="SMR" id="P18581"/>
<dbReference type="BioGRID" id="198276">
    <property type="interactions" value="10"/>
</dbReference>
<dbReference type="FunCoup" id="P18581">
    <property type="interactions" value="165"/>
</dbReference>
<dbReference type="STRING" id="10090.ENSMUSP00000113729"/>
<dbReference type="TCDB" id="2.A.3.3.2">
    <property type="family name" value="the amino acid-polyamine-organocation (apc) family"/>
</dbReference>
<dbReference type="GlyCosmos" id="P18581">
    <property type="glycosylation" value="3 sites, No reported glycans"/>
</dbReference>
<dbReference type="GlyGen" id="P18581">
    <property type="glycosylation" value="4 sites"/>
</dbReference>
<dbReference type="iPTMnet" id="P18581"/>
<dbReference type="PhosphoSitePlus" id="P18581"/>
<dbReference type="SwissPalm" id="P18581"/>
<dbReference type="jPOST" id="P18581"/>
<dbReference type="PaxDb" id="10090-ENSMUSP00000096414"/>
<dbReference type="ProteomicsDB" id="279199">
    <molecule id="P18581-1"/>
</dbReference>
<dbReference type="ProteomicsDB" id="279200">
    <molecule id="P18581-2"/>
</dbReference>
<dbReference type="Antibodypedia" id="2114">
    <property type="antibodies" value="113 antibodies from 24 providers"/>
</dbReference>
<dbReference type="DNASU" id="11988"/>
<dbReference type="Ensembl" id="ENSMUST00000057784.15">
    <molecule id="P18581-1"/>
    <property type="protein sequence ID" value="ENSMUSP00000058866.9"/>
    <property type="gene ID" value="ENSMUSG00000031596.16"/>
</dbReference>
<dbReference type="Ensembl" id="ENSMUST00000098816.10">
    <molecule id="P18581-2"/>
    <property type="protein sequence ID" value="ENSMUSP00000096414.4"/>
    <property type="gene ID" value="ENSMUSG00000031596.16"/>
</dbReference>
<dbReference type="Ensembl" id="ENSMUST00000117077.8">
    <molecule id="P18581-2"/>
    <property type="protein sequence ID" value="ENSMUSP00000113729.2"/>
    <property type="gene ID" value="ENSMUSG00000031596.16"/>
</dbReference>
<dbReference type="GeneID" id="11988"/>
<dbReference type="KEGG" id="mmu:11988"/>
<dbReference type="UCSC" id="uc009lnf.1">
    <molecule id="P18581-1"/>
    <property type="organism name" value="mouse"/>
</dbReference>
<dbReference type="UCSC" id="uc009lng.1">
    <molecule id="P18581-2"/>
    <property type="organism name" value="mouse"/>
</dbReference>
<dbReference type="AGR" id="MGI:99828"/>
<dbReference type="CTD" id="6542"/>
<dbReference type="MGI" id="MGI:99828">
    <property type="gene designation" value="Slc7a2"/>
</dbReference>
<dbReference type="VEuPathDB" id="HostDB:ENSMUSG00000031596"/>
<dbReference type="eggNOG" id="KOG1286">
    <property type="taxonomic scope" value="Eukaryota"/>
</dbReference>
<dbReference type="GeneTree" id="ENSGT00940000160440"/>
<dbReference type="HOGENOM" id="CLU_007946_15_7_1"/>
<dbReference type="InParanoid" id="P18581"/>
<dbReference type="OMA" id="TRVWFSM"/>
<dbReference type="TreeFam" id="TF315212"/>
<dbReference type="BioGRID-ORCS" id="11988">
    <property type="hits" value="0 hits in 77 CRISPR screens"/>
</dbReference>
<dbReference type="ChiTaRS" id="Slc7a2">
    <property type="organism name" value="mouse"/>
</dbReference>
<dbReference type="PRO" id="PR:P18581"/>
<dbReference type="Proteomes" id="UP000000589">
    <property type="component" value="Chromosome 8"/>
</dbReference>
<dbReference type="RNAct" id="P18581">
    <property type="molecule type" value="protein"/>
</dbReference>
<dbReference type="Bgee" id="ENSMUSG00000031596">
    <property type="expression patterns" value="Expressed in epithelium of lens and 210 other cell types or tissues"/>
</dbReference>
<dbReference type="ExpressionAtlas" id="P18581">
    <property type="expression patterns" value="baseline and differential"/>
</dbReference>
<dbReference type="GO" id="GO:0016020">
    <property type="term" value="C:membrane"/>
    <property type="evidence" value="ECO:0000314"/>
    <property type="project" value="MGI"/>
</dbReference>
<dbReference type="GO" id="GO:0005886">
    <property type="term" value="C:plasma membrane"/>
    <property type="evidence" value="ECO:0007669"/>
    <property type="project" value="UniProtKB-SubCell"/>
</dbReference>
<dbReference type="GO" id="GO:0005289">
    <property type="term" value="F:high-affinity L-arginine transmembrane transporter activity"/>
    <property type="evidence" value="ECO:0000314"/>
    <property type="project" value="MGI"/>
</dbReference>
<dbReference type="GO" id="GO:0097627">
    <property type="term" value="F:high-affinity L-ornithine transmembrane transporter activity"/>
    <property type="evidence" value="ECO:0000314"/>
    <property type="project" value="MGI"/>
</dbReference>
<dbReference type="GO" id="GO:0005292">
    <property type="term" value="F:high-affinity lysine transmembrane transporter activity"/>
    <property type="evidence" value="ECO:0000314"/>
    <property type="project" value="MGI"/>
</dbReference>
<dbReference type="GO" id="GO:0061459">
    <property type="term" value="F:L-arginine transmembrane transporter activity"/>
    <property type="evidence" value="ECO:0000314"/>
    <property type="project" value="UniProtKB"/>
</dbReference>
<dbReference type="GO" id="GO:0015189">
    <property type="term" value="F:L-lysine transmembrane transporter activity"/>
    <property type="evidence" value="ECO:0000314"/>
    <property type="project" value="MGI"/>
</dbReference>
<dbReference type="GO" id="GO:0000064">
    <property type="term" value="F:L-ornithine transmembrane transporter activity"/>
    <property type="evidence" value="ECO:0000314"/>
    <property type="project" value="MGI"/>
</dbReference>
<dbReference type="GO" id="GO:0097626">
    <property type="term" value="F:low-affinity L-arginine transmembrane transporter activity"/>
    <property type="evidence" value="ECO:0000314"/>
    <property type="project" value="MGI"/>
</dbReference>
<dbReference type="GO" id="GO:0051649">
    <property type="term" value="P:establishment of localization in cell"/>
    <property type="evidence" value="ECO:0000315"/>
    <property type="project" value="MGI"/>
</dbReference>
<dbReference type="GO" id="GO:0097638">
    <property type="term" value="P:L-arginine import across plasma membrane"/>
    <property type="evidence" value="ECO:0000314"/>
    <property type="project" value="MGI"/>
</dbReference>
<dbReference type="GO" id="GO:1903826">
    <property type="term" value="P:L-arginine transmembrane transport"/>
    <property type="evidence" value="ECO:0000314"/>
    <property type="project" value="UniProtKB"/>
</dbReference>
<dbReference type="GO" id="GO:0097639">
    <property type="term" value="P:L-lysine import across plasma membrane"/>
    <property type="evidence" value="ECO:0000314"/>
    <property type="project" value="MGI"/>
</dbReference>
<dbReference type="GO" id="GO:0097640">
    <property type="term" value="P:L-ornithine import across plasma membrane"/>
    <property type="evidence" value="ECO:0000314"/>
    <property type="project" value="MGI"/>
</dbReference>
<dbReference type="GO" id="GO:1903352">
    <property type="term" value="P:L-ornithine transmembrane transport"/>
    <property type="evidence" value="ECO:0000314"/>
    <property type="project" value="MGI"/>
</dbReference>
<dbReference type="GO" id="GO:0042116">
    <property type="term" value="P:macrophage activation"/>
    <property type="evidence" value="ECO:0000315"/>
    <property type="project" value="MGI"/>
</dbReference>
<dbReference type="GO" id="GO:0006809">
    <property type="term" value="P:nitric oxide biosynthetic process"/>
    <property type="evidence" value="ECO:0000315"/>
    <property type="project" value="MGI"/>
</dbReference>
<dbReference type="GO" id="GO:0002537">
    <property type="term" value="P:nitric oxide production involved in inflammatory response"/>
    <property type="evidence" value="ECO:0000315"/>
    <property type="project" value="MGI"/>
</dbReference>
<dbReference type="GO" id="GO:0050727">
    <property type="term" value="P:regulation of inflammatory response"/>
    <property type="evidence" value="ECO:0000315"/>
    <property type="project" value="MGI"/>
</dbReference>
<dbReference type="GO" id="GO:0043030">
    <property type="term" value="P:regulation of macrophage activation"/>
    <property type="evidence" value="ECO:0000315"/>
    <property type="project" value="UniProtKB"/>
</dbReference>
<dbReference type="FunFam" id="1.20.1740.10:FF:000034">
    <property type="entry name" value="cationic amino acid transporter 2 isoform X2"/>
    <property type="match status" value="1"/>
</dbReference>
<dbReference type="FunFam" id="1.20.1740.10:FF:000009">
    <property type="entry name" value="Low affinity cationic amino acid transporter 2"/>
    <property type="match status" value="1"/>
</dbReference>
<dbReference type="Gene3D" id="1.20.1740.10">
    <property type="entry name" value="Amino acid/polyamine transporter I"/>
    <property type="match status" value="2"/>
</dbReference>
<dbReference type="InterPro" id="IPR002293">
    <property type="entry name" value="AA/rel_permease1"/>
</dbReference>
<dbReference type="InterPro" id="IPR004755">
    <property type="entry name" value="Cat_AA_permease"/>
</dbReference>
<dbReference type="InterPro" id="IPR029485">
    <property type="entry name" value="CAT_C"/>
</dbReference>
<dbReference type="NCBIfam" id="TIGR00906">
    <property type="entry name" value="2A0303"/>
    <property type="match status" value="1"/>
</dbReference>
<dbReference type="PANTHER" id="PTHR43243:SF94">
    <property type="entry name" value="CATIONIC AMINO ACID TRANSPORTER 2"/>
    <property type="match status" value="1"/>
</dbReference>
<dbReference type="PANTHER" id="PTHR43243">
    <property type="entry name" value="INNER MEMBRANE TRANSPORTER YGJI-RELATED"/>
    <property type="match status" value="1"/>
</dbReference>
<dbReference type="Pfam" id="PF13520">
    <property type="entry name" value="AA_permease_2"/>
    <property type="match status" value="1"/>
</dbReference>
<dbReference type="Pfam" id="PF13906">
    <property type="entry name" value="AA_permease_C"/>
    <property type="match status" value="1"/>
</dbReference>
<protein>
    <recommendedName>
        <fullName evidence="16">Cationic amino acid transporter 2</fullName>
        <shortName>CAT-2</shortName>
        <shortName>CAT2</shortName>
    </recommendedName>
    <alternativeName>
        <fullName>20.5</fullName>
    </alternativeName>
    <alternativeName>
        <fullName evidence="14">Low affinity cationic amino acid transporter 2</fullName>
    </alternativeName>
    <alternativeName>
        <fullName>Solute carrier family 7 member 2</fullName>
    </alternativeName>
    <alternativeName>
        <fullName evidence="13">T-cell early activation protein</fullName>
        <shortName evidence="13">TEA</shortName>
    </alternativeName>
</protein>
<reference key="1">
    <citation type="journal article" date="1990" name="Mol. Cell. Biol.">
        <title>Activated T cells express a novel gene on chromosome 8 that is closely related to the murine ecotropic retroviral receptor.</title>
        <authorList>
            <person name="Macleod C.L."/>
            <person name="Finley K."/>
            <person name="Kakuda D."/>
            <person name="Kozak C.A."/>
            <person name="Wilkinson M.F."/>
        </authorList>
    </citation>
    <scope>NUCLEOTIDE SEQUENCE [MRNA] (ISOFORM 2)</scope>
    <source>
        <strain>AKR/J</strain>
        <tissue>T-cell</tissue>
    </source>
</reference>
<reference key="2">
    <citation type="journal article" date="1993" name="J. Biol. Chem.">
        <title>Identification of a low affinity, high capacity transporter of cationic amino acids in mouse liver.</title>
        <authorList>
            <person name="Closs E.I."/>
            <person name="Albritton L.M."/>
            <person name="Kim J.W."/>
            <person name="Cunningham J.M."/>
        </authorList>
    </citation>
    <scope>NUCLEOTIDE SEQUENCE [MRNA] (ISOFORM 1)</scope>
    <scope>FUNCTION</scope>
    <scope>SUBCELLULAR LOCATION</scope>
    <scope>TISSUE SPECIFICITY</scope>
    <scope>GLYCOSYLATION</scope>
    <scope>TRANSPORTER ACTIVITY</scope>
    <source>
        <tissue>Liver</tissue>
    </source>
</reference>
<reference key="3">
    <citation type="journal article" date="1994" name="J. Biol. Chem.">
        <title>Control of cationic amino acid transport and retroviral receptor functions in a membrane protein family.</title>
        <authorList>
            <person name="Kavanaugh M.P."/>
            <person name="Wang H."/>
            <person name="Zhang Z."/>
            <person name="Zhang W."/>
            <person name="Wu Y.N."/>
            <person name="Dechant E."/>
            <person name="North R.A."/>
            <person name="Kabat D."/>
        </authorList>
    </citation>
    <scope>NUCLEOTIDE SEQUENCE [MRNA] (ISOFORM 1)</scope>
    <scope>FUNCTION</scope>
    <scope>SUBCELLULAR LOCATION</scope>
    <scope>ALTERNATIVE SPLICING</scope>
    <scope>BIOPHYSICOCHEMICAL PROPERTIES</scope>
    <scope>TRANSPORTER ACTIVITY</scope>
    <source>
        <tissue>Liver</tissue>
    </source>
</reference>
<reference key="4">
    <citation type="journal article" date="2005" name="Cell">
        <title>Regulating gene expression through RNA nuclear retention.</title>
        <authorList>
            <person name="Prasanth K.V."/>
            <person name="Prasanth S.G."/>
            <person name="Xuan Z."/>
            <person name="Hearn S."/>
            <person name="Freier S.M."/>
            <person name="Bennett C.F."/>
            <person name="Zhang M.Q."/>
            <person name="Spector D.L."/>
        </authorList>
    </citation>
    <scope>NUCLEOTIDE SEQUENCE [MRNA] (ISOFORM 2)</scope>
    <scope>TISSUE SPECIFICITY</scope>
    <source>
        <strain>Swiss Webster / NIH</strain>
    </source>
</reference>
<reference key="5">
    <citation type="journal article" date="2005" name="Science">
        <title>The transcriptional landscape of the mammalian genome.</title>
        <authorList>
            <person name="Carninci P."/>
            <person name="Kasukawa T."/>
            <person name="Katayama S."/>
            <person name="Gough J."/>
            <person name="Frith M.C."/>
            <person name="Maeda N."/>
            <person name="Oyama R."/>
            <person name="Ravasi T."/>
            <person name="Lenhard B."/>
            <person name="Wells C."/>
            <person name="Kodzius R."/>
            <person name="Shimokawa K."/>
            <person name="Bajic V.B."/>
            <person name="Brenner S.E."/>
            <person name="Batalov S."/>
            <person name="Forrest A.R."/>
            <person name="Zavolan M."/>
            <person name="Davis M.J."/>
            <person name="Wilming L.G."/>
            <person name="Aidinis V."/>
            <person name="Allen J.E."/>
            <person name="Ambesi-Impiombato A."/>
            <person name="Apweiler R."/>
            <person name="Aturaliya R.N."/>
            <person name="Bailey T.L."/>
            <person name="Bansal M."/>
            <person name="Baxter L."/>
            <person name="Beisel K.W."/>
            <person name="Bersano T."/>
            <person name="Bono H."/>
            <person name="Chalk A.M."/>
            <person name="Chiu K.P."/>
            <person name="Choudhary V."/>
            <person name="Christoffels A."/>
            <person name="Clutterbuck D.R."/>
            <person name="Crowe M.L."/>
            <person name="Dalla E."/>
            <person name="Dalrymple B.P."/>
            <person name="de Bono B."/>
            <person name="Della Gatta G."/>
            <person name="di Bernardo D."/>
            <person name="Down T."/>
            <person name="Engstrom P."/>
            <person name="Fagiolini M."/>
            <person name="Faulkner G."/>
            <person name="Fletcher C.F."/>
            <person name="Fukushima T."/>
            <person name="Furuno M."/>
            <person name="Futaki S."/>
            <person name="Gariboldi M."/>
            <person name="Georgii-Hemming P."/>
            <person name="Gingeras T.R."/>
            <person name="Gojobori T."/>
            <person name="Green R.E."/>
            <person name="Gustincich S."/>
            <person name="Harbers M."/>
            <person name="Hayashi Y."/>
            <person name="Hensch T.K."/>
            <person name="Hirokawa N."/>
            <person name="Hill D."/>
            <person name="Huminiecki L."/>
            <person name="Iacono M."/>
            <person name="Ikeo K."/>
            <person name="Iwama A."/>
            <person name="Ishikawa T."/>
            <person name="Jakt M."/>
            <person name="Kanapin A."/>
            <person name="Katoh M."/>
            <person name="Kawasawa Y."/>
            <person name="Kelso J."/>
            <person name="Kitamura H."/>
            <person name="Kitano H."/>
            <person name="Kollias G."/>
            <person name="Krishnan S.P."/>
            <person name="Kruger A."/>
            <person name="Kummerfeld S.K."/>
            <person name="Kurochkin I.V."/>
            <person name="Lareau L.F."/>
            <person name="Lazarevic D."/>
            <person name="Lipovich L."/>
            <person name="Liu J."/>
            <person name="Liuni S."/>
            <person name="McWilliam S."/>
            <person name="Madan Babu M."/>
            <person name="Madera M."/>
            <person name="Marchionni L."/>
            <person name="Matsuda H."/>
            <person name="Matsuzawa S."/>
            <person name="Miki H."/>
            <person name="Mignone F."/>
            <person name="Miyake S."/>
            <person name="Morris K."/>
            <person name="Mottagui-Tabar S."/>
            <person name="Mulder N."/>
            <person name="Nakano N."/>
            <person name="Nakauchi H."/>
            <person name="Ng P."/>
            <person name="Nilsson R."/>
            <person name="Nishiguchi S."/>
            <person name="Nishikawa S."/>
            <person name="Nori F."/>
            <person name="Ohara O."/>
            <person name="Okazaki Y."/>
            <person name="Orlando V."/>
            <person name="Pang K.C."/>
            <person name="Pavan W.J."/>
            <person name="Pavesi G."/>
            <person name="Pesole G."/>
            <person name="Petrovsky N."/>
            <person name="Piazza S."/>
            <person name="Reed J."/>
            <person name="Reid J.F."/>
            <person name="Ring B.Z."/>
            <person name="Ringwald M."/>
            <person name="Rost B."/>
            <person name="Ruan Y."/>
            <person name="Salzberg S.L."/>
            <person name="Sandelin A."/>
            <person name="Schneider C."/>
            <person name="Schoenbach C."/>
            <person name="Sekiguchi K."/>
            <person name="Semple C.A."/>
            <person name="Seno S."/>
            <person name="Sessa L."/>
            <person name="Sheng Y."/>
            <person name="Shibata Y."/>
            <person name="Shimada H."/>
            <person name="Shimada K."/>
            <person name="Silva D."/>
            <person name="Sinclair B."/>
            <person name="Sperling S."/>
            <person name="Stupka E."/>
            <person name="Sugiura K."/>
            <person name="Sultana R."/>
            <person name="Takenaka Y."/>
            <person name="Taki K."/>
            <person name="Tammoja K."/>
            <person name="Tan S.L."/>
            <person name="Tang S."/>
            <person name="Taylor M.S."/>
            <person name="Tegner J."/>
            <person name="Teichmann S.A."/>
            <person name="Ueda H.R."/>
            <person name="van Nimwegen E."/>
            <person name="Verardo R."/>
            <person name="Wei C.L."/>
            <person name="Yagi K."/>
            <person name="Yamanishi H."/>
            <person name="Zabarovsky E."/>
            <person name="Zhu S."/>
            <person name="Zimmer A."/>
            <person name="Hide W."/>
            <person name="Bult C."/>
            <person name="Grimmond S.M."/>
            <person name="Teasdale R.D."/>
            <person name="Liu E.T."/>
            <person name="Brusic V."/>
            <person name="Quackenbush J."/>
            <person name="Wahlestedt C."/>
            <person name="Mattick J.S."/>
            <person name="Hume D.A."/>
            <person name="Kai C."/>
            <person name="Sasaki D."/>
            <person name="Tomaru Y."/>
            <person name="Fukuda S."/>
            <person name="Kanamori-Katayama M."/>
            <person name="Suzuki M."/>
            <person name="Aoki J."/>
            <person name="Arakawa T."/>
            <person name="Iida J."/>
            <person name="Imamura K."/>
            <person name="Itoh M."/>
            <person name="Kato T."/>
            <person name="Kawaji H."/>
            <person name="Kawagashira N."/>
            <person name="Kawashima T."/>
            <person name="Kojima M."/>
            <person name="Kondo S."/>
            <person name="Konno H."/>
            <person name="Nakano K."/>
            <person name="Ninomiya N."/>
            <person name="Nishio T."/>
            <person name="Okada M."/>
            <person name="Plessy C."/>
            <person name="Shibata K."/>
            <person name="Shiraki T."/>
            <person name="Suzuki S."/>
            <person name="Tagami M."/>
            <person name="Waki K."/>
            <person name="Watahiki A."/>
            <person name="Okamura-Oho Y."/>
            <person name="Suzuki H."/>
            <person name="Kawai J."/>
            <person name="Hayashizaki Y."/>
        </authorList>
    </citation>
    <scope>NUCLEOTIDE SEQUENCE [LARGE SCALE MRNA] (ISOFORM 2)</scope>
    <source>
        <strain>C57BL/6J</strain>
        <strain>NOD</strain>
    </source>
</reference>
<reference key="6">
    <citation type="journal article" date="2009" name="PLoS Biol.">
        <title>Lineage-specific biology revealed by a finished genome assembly of the mouse.</title>
        <authorList>
            <person name="Church D.M."/>
            <person name="Goodstadt L."/>
            <person name="Hillier L.W."/>
            <person name="Zody M.C."/>
            <person name="Goldstein S."/>
            <person name="She X."/>
            <person name="Bult C.J."/>
            <person name="Agarwala R."/>
            <person name="Cherry J.L."/>
            <person name="DiCuccio M."/>
            <person name="Hlavina W."/>
            <person name="Kapustin Y."/>
            <person name="Meric P."/>
            <person name="Maglott D."/>
            <person name="Birtle Z."/>
            <person name="Marques A.C."/>
            <person name="Graves T."/>
            <person name="Zhou S."/>
            <person name="Teague B."/>
            <person name="Potamousis K."/>
            <person name="Churas C."/>
            <person name="Place M."/>
            <person name="Herschleb J."/>
            <person name="Runnheim R."/>
            <person name="Forrest D."/>
            <person name="Amos-Landgraf J."/>
            <person name="Schwartz D.C."/>
            <person name="Cheng Z."/>
            <person name="Lindblad-Toh K."/>
            <person name="Eichler E.E."/>
            <person name="Ponting C.P."/>
        </authorList>
    </citation>
    <scope>NUCLEOTIDE SEQUENCE [LARGE SCALE GENOMIC DNA]</scope>
    <source>
        <strain>C57BL/6J</strain>
    </source>
</reference>
<reference key="7">
    <citation type="journal article" date="2004" name="Genome Res.">
        <title>The status, quality, and expansion of the NIH full-length cDNA project: the Mammalian Gene Collection (MGC).</title>
        <authorList>
            <consortium name="The MGC Project Team"/>
        </authorList>
    </citation>
    <scope>NUCLEOTIDE SEQUENCE [LARGE SCALE MRNA] (ISOFORM 2)</scope>
</reference>
<reference key="8">
    <citation type="journal article" date="1997" name="Biochemistry">
        <title>Human cationic amino acid transporters hCAT-1, hCAT-2A, and hCAT-2B: three related carriers with distinct transport properties.</title>
        <authorList>
            <person name="Closs E.I."/>
            <person name="Graef P."/>
            <person name="Habermeier A."/>
            <person name="Cunningham J.M."/>
            <person name="Foerstermann U."/>
        </authorList>
    </citation>
    <scope>FUNCTION</scope>
    <scope>TRANSPORTER ACTIVITY</scope>
    <scope>BIOPHYSICOCHEMICAL PROPERTIES</scope>
    <source>
        <tissue>Liver</tissue>
    </source>
</reference>
<reference key="9">
    <citation type="journal article" date="2006" name="J. Immunol.">
        <title>Arginine transport via cationic amino acid transporter 2 plays a critical regulatory role in classical or alternative activation of macrophages.</title>
        <authorList>
            <person name="Yeramian A."/>
            <person name="Martin L."/>
            <person name="Serrat N."/>
            <person name="Arpa L."/>
            <person name="Soler C."/>
            <person name="Bertran J."/>
            <person name="McLeod C."/>
            <person name="Palacin M."/>
            <person name="Modolell M."/>
            <person name="Lloberas J."/>
            <person name="Celada A."/>
        </authorList>
    </citation>
    <scope>FUNCTION</scope>
    <scope>INDUCTION</scope>
</reference>
<reference key="10">
    <citation type="journal article" date="2009" name="Immunity">
        <title>The phagosomal proteome in interferon-gamma-activated macrophages.</title>
        <authorList>
            <person name="Trost M."/>
            <person name="English L."/>
            <person name="Lemieux S."/>
            <person name="Courcelles M."/>
            <person name="Desjardins M."/>
            <person name="Thibault P."/>
        </authorList>
    </citation>
    <scope>PHOSPHORYLATION [LARGE SCALE ANALYSIS] AT SER-645</scope>
    <scope>IDENTIFICATION BY MASS SPECTROMETRY [LARGE SCALE ANALYSIS]</scope>
</reference>
<reference key="11">
    <citation type="journal article" date="2010" name="Cell">
        <title>A tissue-specific atlas of mouse protein phosphorylation and expression.</title>
        <authorList>
            <person name="Huttlin E.L."/>
            <person name="Jedrychowski M.P."/>
            <person name="Elias J.E."/>
            <person name="Goswami T."/>
            <person name="Rad R."/>
            <person name="Beausoleil S.A."/>
            <person name="Villen J."/>
            <person name="Haas W."/>
            <person name="Sowa M.E."/>
            <person name="Gygi S.P."/>
        </authorList>
    </citation>
    <scope>PHOSPHORYLATION [LARGE SCALE ANALYSIS] AT SER-645</scope>
    <scope>IDENTIFICATION BY MASS SPECTROMETRY [LARGE SCALE ANALYSIS]</scope>
    <source>
        <tissue>Brain</tissue>
    </source>
</reference>
<reference key="12">
    <citation type="journal article" date="2017" name="Sci. Rep.">
        <title>Uptake and metabolism of arginine impact Plasmodium development in the liver.</title>
        <authorList>
            <person name="Meireles P."/>
            <person name="Mendes A.M."/>
            <person name="Aroeira R.I."/>
            <person name="Mounce B.C."/>
            <person name="Vignuzzi M."/>
            <person name="Staines H.M."/>
            <person name="Prudencio M."/>
        </authorList>
    </citation>
    <scope>DISRUPTION PHENOTYPE</scope>
</reference>
<evidence type="ECO:0000250" key="1">
    <source>
        <dbReference type="UniProtKB" id="P52569"/>
    </source>
</evidence>
<evidence type="ECO:0000255" key="2"/>
<evidence type="ECO:0000269" key="3">
    <source>
    </source>
</evidence>
<evidence type="ECO:0000269" key="4">
    <source>
    </source>
</evidence>
<evidence type="ECO:0000269" key="5">
    <source>
    </source>
</evidence>
<evidence type="ECO:0000269" key="6">
    <source>
    </source>
</evidence>
<evidence type="ECO:0000269" key="7">
    <source>
    </source>
</evidence>
<evidence type="ECO:0000269" key="8">
    <source>
    </source>
</evidence>
<evidence type="ECO:0000303" key="9">
    <source>
    </source>
</evidence>
<evidence type="ECO:0000303" key="10">
    <source>
    </source>
</evidence>
<evidence type="ECO:0000303" key="11">
    <source>
    </source>
</evidence>
<evidence type="ECO:0000303" key="12">
    <source>
    </source>
</evidence>
<evidence type="ECO:0000303" key="13">
    <source>
    </source>
</evidence>
<evidence type="ECO:0000303" key="14">
    <source>
    </source>
</evidence>
<evidence type="ECO:0000303" key="15">
    <source>
    </source>
</evidence>
<evidence type="ECO:0000305" key="16"/>
<evidence type="ECO:0000305" key="17">
    <source>
    </source>
</evidence>
<evidence type="ECO:0000312" key="18">
    <source>
        <dbReference type="MGI" id="MGI:99828"/>
    </source>
</evidence>
<evidence type="ECO:0007744" key="19">
    <source>
    </source>
</evidence>
<evidence type="ECO:0007744" key="20">
    <source>
    </source>
</evidence>
<sequence length="657" mass="71856">MIPCRAVLTFARCLIRRKIVTLDSLEDSKLCRCLTTVDLIALGVGSTLGAGVYVLAGEVAKADSGPSIVVSFLIAALASVMAGLCYAEFGARVPKTGSAYLYTYVTVGELWAFITGWNLILSYVIGTSSVARAWSGTFDELLNKQIGQFFKTYFKMNYTGLAEYPDFFAVCLVLLLAGLLSFGVKESAWVNKFFTAINILVLLFVMVAGFVKGNVANWKISEEFLKNISASAREPPSENGTSIYGAGGFMPYGFTGTLAGAATCFYAFVGFDCIATTGEEVRNPQKAIPIGIVTSLLVCFMAYFGVSAALTLMMPYYLLDEKSPLPVAFEYVRWSPAKYVVSAGSLCALSTSLLGSMFPLPRILFAMARDGLLFRFLARVSKRQSPVAATMTAGVISAVMAFLFDLKALVDMMSIGTLMAYSLVAACVLILRYQPGLCYDQPKYTPEKETLESCTNATLKSESQVTMLQGQGFSLRTLFSPSALPTRQSASLVSFLVGFLAFLILGLSILTTYGVQAIARLEAWSLALLALFLVLCVAVILTIWRQPQNQQKVAFMVPFLPFLPAFSILVNIYLMVQLSADTWIRFSIWMALGFLIYFAYGIRHSLEGNPRDEEDDEDAFSDNINAATEEKSAMQANDHHQRNLSLPFILHEKTSEC</sequence>